<keyword id="KW-0413">Isomerase</keyword>
<keyword id="KW-1185">Reference proteome</keyword>
<comment type="catalytic activity">
    <reaction evidence="1">
        <text>D-glucuronate = D-fructuronate</text>
        <dbReference type="Rhea" id="RHEA:13049"/>
        <dbReference type="ChEBI" id="CHEBI:58720"/>
        <dbReference type="ChEBI" id="CHEBI:59863"/>
        <dbReference type="EC" id="5.3.1.12"/>
    </reaction>
</comment>
<comment type="catalytic activity">
    <reaction evidence="1">
        <text>aldehydo-D-galacturonate = keto-D-tagaturonate</text>
        <dbReference type="Rhea" id="RHEA:27702"/>
        <dbReference type="ChEBI" id="CHEBI:12952"/>
        <dbReference type="ChEBI" id="CHEBI:17886"/>
        <dbReference type="EC" id="5.3.1.12"/>
    </reaction>
</comment>
<comment type="pathway">
    <text evidence="1">Carbohydrate metabolism; pentose and glucuronate interconversion.</text>
</comment>
<comment type="similarity">
    <text evidence="1">Belongs to the metallo-dependent hydrolases superfamily. Uronate isomerase family.</text>
</comment>
<comment type="sequence caution" evidence="2">
    <conflict type="erroneous initiation">
        <sequence resource="EMBL-CDS" id="AAO75930"/>
    </conflict>
</comment>
<accession>Q8A9J2</accession>
<gene>
    <name evidence="1" type="primary">uxaC</name>
    <name type="ordered locus">BT_0823</name>
</gene>
<evidence type="ECO:0000255" key="1">
    <source>
        <dbReference type="HAMAP-Rule" id="MF_00675"/>
    </source>
</evidence>
<evidence type="ECO:0000305" key="2"/>
<name>UXAC_BACTN</name>
<sequence>MKNFMDENFLLQTETAQKLYHEHAAKMPIIDYHCHLIPQMVADDYKFKSLTEIWLGGDHYKWRAMRTNGVDERYCTGKDTTDWEKFEKWAETVPYTFRNPLYHWTHLELKTAFGIDKILSPKTAREIYDECNEKLAQPEYSARGMMRRYHVEVVCTTDDPIDSLEYHIQTRESGFEIKMLPTWRPDKAMAVEVPADFRAYVEKLSAVSGVTISNFDDMIAALRKRHDFFAEQGCRLSDHGIEEFYAEDYTDAEIKAIFNKVYGGAELTKEEILKFKSAMLVIFGEMDWEKGWTQQFHYGAIRNNNTKMFKLLGPDTGFDSIGEFTTAKAMSKFLDRLNVNGKLTKTILYNLNPCANEVIATMLGNFQDGSIAGKIQFGSGWWFLDQKDGMEKQMNALSVLGLLSRFVGMLTDSRSFLSYPRHEYFRRTLCNLVGRDVENGEIPVSEMDRVNQMIEDISYNNAKNFFKF</sequence>
<dbReference type="EC" id="5.3.1.12" evidence="1"/>
<dbReference type="EMBL" id="AE015928">
    <property type="protein sequence ID" value="AAO75930.1"/>
    <property type="status" value="ALT_INIT"/>
    <property type="molecule type" value="Genomic_DNA"/>
</dbReference>
<dbReference type="RefSeq" id="NP_809736.2">
    <property type="nucleotide sequence ID" value="NC_004663.1"/>
</dbReference>
<dbReference type="RefSeq" id="WP_008765680.1">
    <property type="nucleotide sequence ID" value="NC_004663.1"/>
</dbReference>
<dbReference type="SMR" id="Q8A9J2"/>
<dbReference type="FunCoup" id="Q8A9J2">
    <property type="interactions" value="112"/>
</dbReference>
<dbReference type="STRING" id="226186.BT_0823"/>
<dbReference type="PaxDb" id="226186-BT_0823"/>
<dbReference type="EnsemblBacteria" id="AAO75930">
    <property type="protein sequence ID" value="AAO75930"/>
    <property type="gene ID" value="BT_0823"/>
</dbReference>
<dbReference type="GeneID" id="60926793"/>
<dbReference type="KEGG" id="bth:BT_0823"/>
<dbReference type="PATRIC" id="fig|226186.12.peg.839"/>
<dbReference type="eggNOG" id="COG1904">
    <property type="taxonomic scope" value="Bacteria"/>
</dbReference>
<dbReference type="HOGENOM" id="CLU_044465_1_0_10"/>
<dbReference type="InParanoid" id="Q8A9J2"/>
<dbReference type="OrthoDB" id="9766564at2"/>
<dbReference type="UniPathway" id="UPA00246"/>
<dbReference type="Proteomes" id="UP000001414">
    <property type="component" value="Chromosome"/>
</dbReference>
<dbReference type="GO" id="GO:0008880">
    <property type="term" value="F:glucuronate isomerase activity"/>
    <property type="evidence" value="ECO:0007669"/>
    <property type="project" value="UniProtKB-UniRule"/>
</dbReference>
<dbReference type="GO" id="GO:0019698">
    <property type="term" value="P:D-galacturonate catabolic process"/>
    <property type="evidence" value="ECO:0000318"/>
    <property type="project" value="GO_Central"/>
</dbReference>
<dbReference type="GO" id="GO:0042840">
    <property type="term" value="P:D-glucuronate catabolic process"/>
    <property type="evidence" value="ECO:0000318"/>
    <property type="project" value="GO_Central"/>
</dbReference>
<dbReference type="Gene3D" id="3.20.20.140">
    <property type="entry name" value="Metal-dependent hydrolases"/>
    <property type="match status" value="1"/>
</dbReference>
<dbReference type="Gene3D" id="1.10.2020.10">
    <property type="entry name" value="uronate isomerase, domain 2, chain A"/>
    <property type="match status" value="1"/>
</dbReference>
<dbReference type="HAMAP" id="MF_00675">
    <property type="entry name" value="UxaC"/>
    <property type="match status" value="1"/>
</dbReference>
<dbReference type="InterPro" id="IPR032466">
    <property type="entry name" value="Metal_Hydrolase"/>
</dbReference>
<dbReference type="InterPro" id="IPR003766">
    <property type="entry name" value="Uronate_isomerase"/>
</dbReference>
<dbReference type="NCBIfam" id="NF002794">
    <property type="entry name" value="PRK02925.1"/>
    <property type="match status" value="1"/>
</dbReference>
<dbReference type="PANTHER" id="PTHR30068">
    <property type="entry name" value="URONATE ISOMERASE"/>
    <property type="match status" value="1"/>
</dbReference>
<dbReference type="PANTHER" id="PTHR30068:SF4">
    <property type="entry name" value="URONATE ISOMERASE"/>
    <property type="match status" value="1"/>
</dbReference>
<dbReference type="Pfam" id="PF02614">
    <property type="entry name" value="UxaC"/>
    <property type="match status" value="1"/>
</dbReference>
<dbReference type="SUPFAM" id="SSF51556">
    <property type="entry name" value="Metallo-dependent hydrolases"/>
    <property type="match status" value="1"/>
</dbReference>
<proteinExistence type="inferred from homology"/>
<reference key="1">
    <citation type="journal article" date="2003" name="Science">
        <title>A genomic view of the human-Bacteroides thetaiotaomicron symbiosis.</title>
        <authorList>
            <person name="Xu J."/>
            <person name="Bjursell M.K."/>
            <person name="Himrod J."/>
            <person name="Deng S."/>
            <person name="Carmichael L.K."/>
            <person name="Chiang H.C."/>
            <person name="Hooper L.V."/>
            <person name="Gordon J.I."/>
        </authorList>
    </citation>
    <scope>NUCLEOTIDE SEQUENCE [LARGE SCALE GENOMIC DNA]</scope>
    <source>
        <strain>ATCC 29148 / DSM 2079 / JCM 5827 / CCUG 10774 / NCTC 10582 / VPI-5482 / E50</strain>
    </source>
</reference>
<protein>
    <recommendedName>
        <fullName evidence="1">Uronate isomerase</fullName>
        <ecNumber evidence="1">5.3.1.12</ecNumber>
    </recommendedName>
    <alternativeName>
        <fullName evidence="1">Glucuronate isomerase</fullName>
    </alternativeName>
    <alternativeName>
        <fullName evidence="1">Uronic isomerase</fullName>
    </alternativeName>
</protein>
<organism>
    <name type="scientific">Bacteroides thetaiotaomicron (strain ATCC 29148 / DSM 2079 / JCM 5827 / CCUG 10774 / NCTC 10582 / VPI-5482 / E50)</name>
    <dbReference type="NCBI Taxonomy" id="226186"/>
    <lineage>
        <taxon>Bacteria</taxon>
        <taxon>Pseudomonadati</taxon>
        <taxon>Bacteroidota</taxon>
        <taxon>Bacteroidia</taxon>
        <taxon>Bacteroidales</taxon>
        <taxon>Bacteroidaceae</taxon>
        <taxon>Bacteroides</taxon>
    </lineage>
</organism>
<feature type="chain" id="PRO_0000172763" description="Uronate isomerase">
    <location>
        <begin position="1"/>
        <end position="468"/>
    </location>
</feature>